<protein>
    <recommendedName>
        <fullName evidence="1">Large ribosomal subunit protein eL34</fullName>
    </recommendedName>
    <alternativeName>
        <fullName evidence="3">50S ribosomal protein L34e</fullName>
    </alternativeName>
</protein>
<feature type="chain" id="PRO_1000133410" description="Large ribosomal subunit protein eL34">
    <location>
        <begin position="1"/>
        <end position="89"/>
    </location>
</feature>
<feature type="region of interest" description="Disordered" evidence="2">
    <location>
        <begin position="1"/>
        <end position="22"/>
    </location>
</feature>
<accession>A6VJT2</accession>
<dbReference type="EMBL" id="CP000745">
    <property type="protein sequence ID" value="ABR66708.1"/>
    <property type="molecule type" value="Genomic_DNA"/>
</dbReference>
<dbReference type="SMR" id="A6VJT2"/>
<dbReference type="STRING" id="426368.MmarC7_1650"/>
<dbReference type="KEGG" id="mmz:MmarC7_1650"/>
<dbReference type="eggNOG" id="arCOG04168">
    <property type="taxonomic scope" value="Archaea"/>
</dbReference>
<dbReference type="HOGENOM" id="CLU_118652_2_0_2"/>
<dbReference type="OrthoDB" id="43096at2157"/>
<dbReference type="GO" id="GO:1990904">
    <property type="term" value="C:ribonucleoprotein complex"/>
    <property type="evidence" value="ECO:0007669"/>
    <property type="project" value="UniProtKB-KW"/>
</dbReference>
<dbReference type="GO" id="GO:0005840">
    <property type="term" value="C:ribosome"/>
    <property type="evidence" value="ECO:0007669"/>
    <property type="project" value="UniProtKB-KW"/>
</dbReference>
<dbReference type="GO" id="GO:0003735">
    <property type="term" value="F:structural constituent of ribosome"/>
    <property type="evidence" value="ECO:0007669"/>
    <property type="project" value="InterPro"/>
</dbReference>
<dbReference type="GO" id="GO:0006412">
    <property type="term" value="P:translation"/>
    <property type="evidence" value="ECO:0007669"/>
    <property type="project" value="UniProtKB-UniRule"/>
</dbReference>
<dbReference type="Gene3D" id="6.20.340.10">
    <property type="match status" value="1"/>
</dbReference>
<dbReference type="HAMAP" id="MF_00349">
    <property type="entry name" value="Ribosomal_eL34"/>
    <property type="match status" value="1"/>
</dbReference>
<dbReference type="InterPro" id="IPR008195">
    <property type="entry name" value="Ribosomal_eL34"/>
</dbReference>
<dbReference type="InterPro" id="IPR038562">
    <property type="entry name" value="Ribosomal_eL34_C_sf"/>
</dbReference>
<dbReference type="InterPro" id="IPR047868">
    <property type="entry name" value="Ribosomal_L34e_arc-type"/>
</dbReference>
<dbReference type="NCBIfam" id="NF003143">
    <property type="entry name" value="PRK04059.1"/>
    <property type="match status" value="1"/>
</dbReference>
<dbReference type="PANTHER" id="PTHR10759">
    <property type="entry name" value="60S RIBOSOMAL PROTEIN L34"/>
    <property type="match status" value="1"/>
</dbReference>
<dbReference type="Pfam" id="PF01199">
    <property type="entry name" value="Ribosomal_L34e"/>
    <property type="match status" value="1"/>
</dbReference>
<dbReference type="PRINTS" id="PR01250">
    <property type="entry name" value="RIBOSOMALL34"/>
</dbReference>
<keyword id="KW-0687">Ribonucleoprotein</keyword>
<keyword id="KW-0689">Ribosomal protein</keyword>
<name>RL34_METM7</name>
<evidence type="ECO:0000255" key="1">
    <source>
        <dbReference type="HAMAP-Rule" id="MF_00349"/>
    </source>
</evidence>
<evidence type="ECO:0000256" key="2">
    <source>
        <dbReference type="SAM" id="MobiDB-lite"/>
    </source>
</evidence>
<evidence type="ECO:0000305" key="3"/>
<comment type="similarity">
    <text evidence="1">Belongs to the eukaryotic ribosomal protein eL34 family.</text>
</comment>
<reference key="1">
    <citation type="submission" date="2007-06" db="EMBL/GenBank/DDBJ databases">
        <title>Complete sequence of Methanococcus maripaludis C7.</title>
        <authorList>
            <consortium name="US DOE Joint Genome Institute"/>
            <person name="Copeland A."/>
            <person name="Lucas S."/>
            <person name="Lapidus A."/>
            <person name="Barry K."/>
            <person name="Glavina del Rio T."/>
            <person name="Dalin E."/>
            <person name="Tice H."/>
            <person name="Pitluck S."/>
            <person name="Clum A."/>
            <person name="Schmutz J."/>
            <person name="Larimer F."/>
            <person name="Land M."/>
            <person name="Hauser L."/>
            <person name="Kyrpides N."/>
            <person name="Anderson I."/>
            <person name="Sieprawska-Lupa M."/>
            <person name="Whitman W.B."/>
            <person name="Richardson P."/>
        </authorList>
    </citation>
    <scope>NUCLEOTIDE SEQUENCE [LARGE SCALE GENOMIC DNA]</scope>
    <source>
        <strain>C7 / ATCC BAA-1331</strain>
    </source>
</reference>
<sequence>MPAPRYKSGSSKKVYRKAPGNSSIVHYRRKKQSKAVCGACGALLNGVPRGRAVEITKLAKTQKRPERAFGGNLCPKCVKKMMVIKARNF</sequence>
<organism>
    <name type="scientific">Methanococcus maripaludis (strain C7 / ATCC BAA-1331)</name>
    <dbReference type="NCBI Taxonomy" id="426368"/>
    <lineage>
        <taxon>Archaea</taxon>
        <taxon>Methanobacteriati</taxon>
        <taxon>Methanobacteriota</taxon>
        <taxon>Methanomada group</taxon>
        <taxon>Methanococci</taxon>
        <taxon>Methanococcales</taxon>
        <taxon>Methanococcaceae</taxon>
        <taxon>Methanococcus</taxon>
    </lineage>
</organism>
<gene>
    <name evidence="1" type="primary">rpl34e</name>
    <name type="ordered locus">MmarC7_1650</name>
</gene>
<proteinExistence type="inferred from homology"/>